<dbReference type="EMBL" id="CP000016">
    <property type="protein sequence ID" value="AAZ40833.1"/>
    <property type="molecule type" value="Genomic_DNA"/>
</dbReference>
<dbReference type="RefSeq" id="WP_011282740.1">
    <property type="nucleotide sequence ID" value="NC_007292.1"/>
</dbReference>
<dbReference type="SMR" id="Q493K7"/>
<dbReference type="STRING" id="291272.BPEN_199"/>
<dbReference type="KEGG" id="bpn:BPEN_199"/>
<dbReference type="eggNOG" id="COG0088">
    <property type="taxonomic scope" value="Bacteria"/>
</dbReference>
<dbReference type="HOGENOM" id="CLU_041575_5_2_6"/>
<dbReference type="OrthoDB" id="9803201at2"/>
<dbReference type="Proteomes" id="UP000007794">
    <property type="component" value="Chromosome"/>
</dbReference>
<dbReference type="GO" id="GO:1990904">
    <property type="term" value="C:ribonucleoprotein complex"/>
    <property type="evidence" value="ECO:0007669"/>
    <property type="project" value="UniProtKB-KW"/>
</dbReference>
<dbReference type="GO" id="GO:0005840">
    <property type="term" value="C:ribosome"/>
    <property type="evidence" value="ECO:0007669"/>
    <property type="project" value="UniProtKB-KW"/>
</dbReference>
<dbReference type="GO" id="GO:0019843">
    <property type="term" value="F:rRNA binding"/>
    <property type="evidence" value="ECO:0007669"/>
    <property type="project" value="UniProtKB-UniRule"/>
</dbReference>
<dbReference type="GO" id="GO:0003735">
    <property type="term" value="F:structural constituent of ribosome"/>
    <property type="evidence" value="ECO:0007669"/>
    <property type="project" value="InterPro"/>
</dbReference>
<dbReference type="GO" id="GO:0006412">
    <property type="term" value="P:translation"/>
    <property type="evidence" value="ECO:0007669"/>
    <property type="project" value="UniProtKB-UniRule"/>
</dbReference>
<dbReference type="Gene3D" id="3.40.1370.10">
    <property type="match status" value="1"/>
</dbReference>
<dbReference type="HAMAP" id="MF_01328_B">
    <property type="entry name" value="Ribosomal_uL4_B"/>
    <property type="match status" value="1"/>
</dbReference>
<dbReference type="InterPro" id="IPR002136">
    <property type="entry name" value="Ribosomal_uL4"/>
</dbReference>
<dbReference type="InterPro" id="IPR013005">
    <property type="entry name" value="Ribosomal_uL4-like"/>
</dbReference>
<dbReference type="InterPro" id="IPR023574">
    <property type="entry name" value="Ribosomal_uL4_dom_sf"/>
</dbReference>
<dbReference type="NCBIfam" id="TIGR03953">
    <property type="entry name" value="rplD_bact"/>
    <property type="match status" value="1"/>
</dbReference>
<dbReference type="PANTHER" id="PTHR10746">
    <property type="entry name" value="50S RIBOSOMAL PROTEIN L4"/>
    <property type="match status" value="1"/>
</dbReference>
<dbReference type="PANTHER" id="PTHR10746:SF6">
    <property type="entry name" value="LARGE RIBOSOMAL SUBUNIT PROTEIN UL4M"/>
    <property type="match status" value="1"/>
</dbReference>
<dbReference type="Pfam" id="PF00573">
    <property type="entry name" value="Ribosomal_L4"/>
    <property type="match status" value="1"/>
</dbReference>
<dbReference type="SUPFAM" id="SSF52166">
    <property type="entry name" value="Ribosomal protein L4"/>
    <property type="match status" value="1"/>
</dbReference>
<feature type="chain" id="PRO_0000242346" description="Large ribosomal subunit protein uL4">
    <location>
        <begin position="1"/>
        <end position="210"/>
    </location>
</feature>
<feature type="region of interest" description="Disordered" evidence="2">
    <location>
        <begin position="47"/>
        <end position="83"/>
    </location>
</feature>
<feature type="compositionally biased region" description="Polar residues" evidence="2">
    <location>
        <begin position="47"/>
        <end position="64"/>
    </location>
</feature>
<accession>Q493K7</accession>
<gene>
    <name evidence="1" type="primary">rplD</name>
    <name type="ordered locus">BPEN_199</name>
</gene>
<sequence>MELEVRDFTTEINILDSEKFSVSDEIFKCPFNQALIHQVISTYLTNSRQGTRSQKSRSEVSGSNKKPWRQKGTGRARSGSVKSPIWRSGGVTFAAKPKLYAQKINKKMYRGAIRSILSKLVCDNRLFLVRNLFIKEPKTKLLLEKLRTITSKKSILIFTDFLDKNLLLASRNVHKIEVRTATHIDPVSLINFNVTLIADNVIKKIEKQLV</sequence>
<proteinExistence type="inferred from homology"/>
<organism>
    <name type="scientific">Blochmanniella pennsylvanica (strain BPEN)</name>
    <dbReference type="NCBI Taxonomy" id="291272"/>
    <lineage>
        <taxon>Bacteria</taxon>
        <taxon>Pseudomonadati</taxon>
        <taxon>Pseudomonadota</taxon>
        <taxon>Gammaproteobacteria</taxon>
        <taxon>Enterobacterales</taxon>
        <taxon>Enterobacteriaceae</taxon>
        <taxon>ant endosymbionts</taxon>
        <taxon>Candidatus Blochmanniella</taxon>
    </lineage>
</organism>
<protein>
    <recommendedName>
        <fullName evidence="1">Large ribosomal subunit protein uL4</fullName>
    </recommendedName>
    <alternativeName>
        <fullName evidence="3">50S ribosomal protein L4</fullName>
    </alternativeName>
</protein>
<reference key="1">
    <citation type="journal article" date="2005" name="Genome Res.">
        <title>Genome sequence of Blochmannia pennsylvanicus indicates parallel evolutionary trends among bacterial mutualists of insects.</title>
        <authorList>
            <person name="Degnan P.H."/>
            <person name="Lazarus A.B."/>
            <person name="Wernegreen J.J."/>
        </authorList>
    </citation>
    <scope>NUCLEOTIDE SEQUENCE [LARGE SCALE GENOMIC DNA]</scope>
    <source>
        <strain>BPEN</strain>
    </source>
</reference>
<name>RL4_BLOPB</name>
<evidence type="ECO:0000255" key="1">
    <source>
        <dbReference type="HAMAP-Rule" id="MF_01328"/>
    </source>
</evidence>
<evidence type="ECO:0000256" key="2">
    <source>
        <dbReference type="SAM" id="MobiDB-lite"/>
    </source>
</evidence>
<evidence type="ECO:0000305" key="3"/>
<keyword id="KW-1185">Reference proteome</keyword>
<keyword id="KW-0687">Ribonucleoprotein</keyword>
<keyword id="KW-0689">Ribosomal protein</keyword>
<keyword id="KW-0694">RNA-binding</keyword>
<keyword id="KW-0699">rRNA-binding</keyword>
<comment type="function">
    <text evidence="1">One of the primary rRNA binding proteins, this protein initially binds near the 5'-end of the 23S rRNA. It is important during the early stages of 50S assembly. It makes multiple contacts with different domains of the 23S rRNA in the assembled 50S subunit and ribosome.</text>
</comment>
<comment type="function">
    <text evidence="1">Forms part of the polypeptide exit tunnel.</text>
</comment>
<comment type="subunit">
    <text evidence="1">Part of the 50S ribosomal subunit.</text>
</comment>
<comment type="similarity">
    <text evidence="1">Belongs to the universal ribosomal protein uL4 family.</text>
</comment>